<reference key="1">
    <citation type="journal article" date="2011" name="Stand. Genomic Sci.">
        <title>Complete genome sequence of the halophilic and highly halotolerant Chromohalobacter salexigens type strain (1H11(T)).</title>
        <authorList>
            <person name="Copeland A."/>
            <person name="O'Connor K."/>
            <person name="Lucas S."/>
            <person name="Lapidus A."/>
            <person name="Berry K.W."/>
            <person name="Detter J.C."/>
            <person name="Del Rio T.G."/>
            <person name="Hammon N."/>
            <person name="Dalin E."/>
            <person name="Tice H."/>
            <person name="Pitluck S."/>
            <person name="Bruce D."/>
            <person name="Goodwin L."/>
            <person name="Han C."/>
            <person name="Tapia R."/>
            <person name="Saunders E."/>
            <person name="Schmutz J."/>
            <person name="Brettin T."/>
            <person name="Larimer F."/>
            <person name="Land M."/>
            <person name="Hauser L."/>
            <person name="Vargas C."/>
            <person name="Nieto J.J."/>
            <person name="Kyrpides N.C."/>
            <person name="Ivanova N."/>
            <person name="Goker M."/>
            <person name="Klenk H.P."/>
            <person name="Csonka L.N."/>
            <person name="Woyke T."/>
        </authorList>
    </citation>
    <scope>NUCLEOTIDE SEQUENCE [LARGE SCALE GENOMIC DNA]</scope>
    <source>
        <strain>ATCC BAA-138 / DSM 3043 / CIP 106854 / NCIMB 13768 / 1H11</strain>
    </source>
</reference>
<comment type="function">
    <text evidence="1">With CysN forms the ATP sulfurylase (ATPS) that catalyzes the adenylation of sulfate producing adenosine 5'-phosphosulfate (APS) and diphosphate, the first enzymatic step in sulfur assimilation pathway. APS synthesis involves the formation of a high-energy phosphoric-sulfuric acid anhydride bond driven by GTP hydrolysis by CysN coupled to ATP hydrolysis by CysD.</text>
</comment>
<comment type="catalytic activity">
    <reaction evidence="1">
        <text>sulfate + ATP + H(+) = adenosine 5'-phosphosulfate + diphosphate</text>
        <dbReference type="Rhea" id="RHEA:18133"/>
        <dbReference type="ChEBI" id="CHEBI:15378"/>
        <dbReference type="ChEBI" id="CHEBI:16189"/>
        <dbReference type="ChEBI" id="CHEBI:30616"/>
        <dbReference type="ChEBI" id="CHEBI:33019"/>
        <dbReference type="ChEBI" id="CHEBI:58243"/>
        <dbReference type="EC" id="2.7.7.4"/>
    </reaction>
</comment>
<comment type="pathway">
    <text evidence="1">Sulfur metabolism; hydrogen sulfide biosynthesis; sulfite from sulfate: step 1/3.</text>
</comment>
<comment type="subunit">
    <text evidence="1">Heterodimer composed of CysD, the smaller subunit, and CysN.</text>
</comment>
<comment type="similarity">
    <text evidence="1">Belongs to the PAPS reductase family. CysD subfamily.</text>
</comment>
<protein>
    <recommendedName>
        <fullName evidence="1">Sulfate adenylyltransferase subunit 2 1</fullName>
        <ecNumber evidence="1">2.7.7.4</ecNumber>
    </recommendedName>
    <alternativeName>
        <fullName evidence="1">ATP-sulfurylase small subunit 1</fullName>
    </alternativeName>
    <alternativeName>
        <fullName evidence="1">Sulfate adenylate transferase 1</fullName>
        <shortName evidence="1">SAT 1</shortName>
    </alternativeName>
</protein>
<accession>Q1QWX0</accession>
<organism>
    <name type="scientific">Chromohalobacter salexigens (strain ATCC BAA-138 / DSM 3043 / CIP 106854 / NCIMB 13768 / 1H11)</name>
    <dbReference type="NCBI Taxonomy" id="290398"/>
    <lineage>
        <taxon>Bacteria</taxon>
        <taxon>Pseudomonadati</taxon>
        <taxon>Pseudomonadota</taxon>
        <taxon>Gammaproteobacteria</taxon>
        <taxon>Oceanospirillales</taxon>
        <taxon>Halomonadaceae</taxon>
        <taxon>Chromohalobacter</taxon>
    </lineage>
</organism>
<evidence type="ECO:0000255" key="1">
    <source>
        <dbReference type="HAMAP-Rule" id="MF_00064"/>
    </source>
</evidence>
<evidence type="ECO:0000256" key="2">
    <source>
        <dbReference type="SAM" id="MobiDB-lite"/>
    </source>
</evidence>
<feature type="chain" id="PRO_0000340192" description="Sulfate adenylyltransferase subunit 2 1">
    <location>
        <begin position="1"/>
        <end position="305"/>
    </location>
</feature>
<feature type="region of interest" description="Disordered" evidence="2">
    <location>
        <begin position="283"/>
        <end position="305"/>
    </location>
</feature>
<proteinExistence type="inferred from homology"/>
<keyword id="KW-0067">ATP-binding</keyword>
<keyword id="KW-0547">Nucleotide-binding</keyword>
<keyword id="KW-0548">Nucleotidyltransferase</keyword>
<keyword id="KW-1185">Reference proteome</keyword>
<keyword id="KW-0808">Transferase</keyword>
<name>CYSD1_CHRSD</name>
<sequence length="305" mass="35196">MSGITPERQTHLKQLEAESIHIIREVAAEFANPVMLYSIGKDSSVMLHLARKAFYPGTPPFPLMHVNTTWKFKEMIEFRDRMAAEVGMELIEHINEEGRAAGINPFDHGSAKYTDVMKTQSLKQALDKYGFDAAFGGARRDEEASRAKERVYSFRDKHHRWDPKNQRPELWNIYNGKVQKGESIRVFPLSNWTELDIWQYIYLESIPIVPLYYAAPRPVVERDGMQIMVDDERLPLEDGEVPEEKWVRFRTLGCYPLTGAVESTAATLPEIIQEMLLTRTSERSGRAIDHDQAGSMERKKREGYF</sequence>
<gene>
    <name evidence="1" type="primary">cysD1</name>
    <name type="ordered locus">Csal_1686</name>
</gene>
<dbReference type="EC" id="2.7.7.4" evidence="1"/>
<dbReference type="EMBL" id="CP000285">
    <property type="protein sequence ID" value="ABE59038.1"/>
    <property type="molecule type" value="Genomic_DNA"/>
</dbReference>
<dbReference type="RefSeq" id="WP_011506984.1">
    <property type="nucleotide sequence ID" value="NC_007963.1"/>
</dbReference>
<dbReference type="SMR" id="Q1QWX0"/>
<dbReference type="STRING" id="290398.Csal_1686"/>
<dbReference type="GeneID" id="95334407"/>
<dbReference type="KEGG" id="csa:Csal_1686"/>
<dbReference type="eggNOG" id="COG0175">
    <property type="taxonomic scope" value="Bacteria"/>
</dbReference>
<dbReference type="HOGENOM" id="CLU_043026_0_0_6"/>
<dbReference type="OrthoDB" id="9772604at2"/>
<dbReference type="UniPathway" id="UPA00140">
    <property type="reaction ID" value="UER00204"/>
</dbReference>
<dbReference type="Proteomes" id="UP000000239">
    <property type="component" value="Chromosome"/>
</dbReference>
<dbReference type="GO" id="GO:0005524">
    <property type="term" value="F:ATP binding"/>
    <property type="evidence" value="ECO:0007669"/>
    <property type="project" value="UniProtKB-KW"/>
</dbReference>
<dbReference type="GO" id="GO:0004781">
    <property type="term" value="F:sulfate adenylyltransferase (ATP) activity"/>
    <property type="evidence" value="ECO:0007669"/>
    <property type="project" value="UniProtKB-UniRule"/>
</dbReference>
<dbReference type="GO" id="GO:0070814">
    <property type="term" value="P:hydrogen sulfide biosynthetic process"/>
    <property type="evidence" value="ECO:0007669"/>
    <property type="project" value="UniProtKB-UniRule"/>
</dbReference>
<dbReference type="GO" id="GO:0000103">
    <property type="term" value="P:sulfate assimilation"/>
    <property type="evidence" value="ECO:0007669"/>
    <property type="project" value="UniProtKB-UniRule"/>
</dbReference>
<dbReference type="CDD" id="cd23946">
    <property type="entry name" value="Sulfate_adenylyltransferase_2"/>
    <property type="match status" value="1"/>
</dbReference>
<dbReference type="FunFam" id="3.40.50.620:FF:000002">
    <property type="entry name" value="Sulfate adenylyltransferase subunit 2"/>
    <property type="match status" value="1"/>
</dbReference>
<dbReference type="Gene3D" id="3.40.50.620">
    <property type="entry name" value="HUPs"/>
    <property type="match status" value="1"/>
</dbReference>
<dbReference type="HAMAP" id="MF_00064">
    <property type="entry name" value="Sulf_adenylyltr_sub2"/>
    <property type="match status" value="1"/>
</dbReference>
<dbReference type="InterPro" id="IPR002500">
    <property type="entry name" value="PAPS_reduct_dom"/>
</dbReference>
<dbReference type="InterPro" id="IPR014729">
    <property type="entry name" value="Rossmann-like_a/b/a_fold"/>
</dbReference>
<dbReference type="InterPro" id="IPR011784">
    <property type="entry name" value="SO4_adenylTrfase_ssu"/>
</dbReference>
<dbReference type="InterPro" id="IPR050128">
    <property type="entry name" value="Sulfate_adenylyltrnsfr_sub2"/>
</dbReference>
<dbReference type="NCBIfam" id="TIGR02039">
    <property type="entry name" value="CysD"/>
    <property type="match status" value="1"/>
</dbReference>
<dbReference type="NCBIfam" id="NF003587">
    <property type="entry name" value="PRK05253.1"/>
    <property type="match status" value="1"/>
</dbReference>
<dbReference type="NCBIfam" id="NF009214">
    <property type="entry name" value="PRK12563.1"/>
    <property type="match status" value="1"/>
</dbReference>
<dbReference type="PANTHER" id="PTHR43196">
    <property type="entry name" value="SULFATE ADENYLYLTRANSFERASE SUBUNIT 2"/>
    <property type="match status" value="1"/>
</dbReference>
<dbReference type="PANTHER" id="PTHR43196:SF1">
    <property type="entry name" value="SULFATE ADENYLYLTRANSFERASE SUBUNIT 2"/>
    <property type="match status" value="1"/>
</dbReference>
<dbReference type="Pfam" id="PF01507">
    <property type="entry name" value="PAPS_reduct"/>
    <property type="match status" value="1"/>
</dbReference>
<dbReference type="PIRSF" id="PIRSF002936">
    <property type="entry name" value="CysDAde_trans"/>
    <property type="match status" value="1"/>
</dbReference>
<dbReference type="SUPFAM" id="SSF52402">
    <property type="entry name" value="Adenine nucleotide alpha hydrolases-like"/>
    <property type="match status" value="1"/>
</dbReference>